<dbReference type="EC" id="3.6.1.-" evidence="1"/>
<dbReference type="EMBL" id="CP001068">
    <property type="protein sequence ID" value="ACD28185.1"/>
    <property type="molecule type" value="Genomic_DNA"/>
</dbReference>
<dbReference type="SMR" id="B2UCV0"/>
<dbReference type="STRING" id="402626.Rpic_3062"/>
<dbReference type="KEGG" id="rpi:Rpic_3062"/>
<dbReference type="PATRIC" id="fig|402626.5.peg.4199"/>
<dbReference type="eggNOG" id="COG0494">
    <property type="taxonomic scope" value="Bacteria"/>
</dbReference>
<dbReference type="HOGENOM" id="CLU_087195_1_0_4"/>
<dbReference type="GO" id="GO:0016462">
    <property type="term" value="F:pyrophosphatase activity"/>
    <property type="evidence" value="ECO:0007669"/>
    <property type="project" value="UniProtKB-ARBA"/>
</dbReference>
<dbReference type="CDD" id="cd03671">
    <property type="entry name" value="NUDIX_Ap4A_hydrolase_plant_like"/>
    <property type="match status" value="1"/>
</dbReference>
<dbReference type="Gene3D" id="3.90.79.10">
    <property type="entry name" value="Nucleoside Triphosphate Pyrophosphohydrolase"/>
    <property type="match status" value="1"/>
</dbReference>
<dbReference type="HAMAP" id="MF_00298">
    <property type="entry name" value="Nudix_RppH"/>
    <property type="match status" value="1"/>
</dbReference>
<dbReference type="InterPro" id="IPR020476">
    <property type="entry name" value="Nudix_hydrolase"/>
</dbReference>
<dbReference type="InterPro" id="IPR015797">
    <property type="entry name" value="NUDIX_hydrolase-like_dom_sf"/>
</dbReference>
<dbReference type="InterPro" id="IPR020084">
    <property type="entry name" value="NUDIX_hydrolase_CS"/>
</dbReference>
<dbReference type="InterPro" id="IPR000086">
    <property type="entry name" value="NUDIX_hydrolase_dom"/>
</dbReference>
<dbReference type="InterPro" id="IPR022927">
    <property type="entry name" value="RppH"/>
</dbReference>
<dbReference type="NCBIfam" id="NF001935">
    <property type="entry name" value="PRK00714.1-2"/>
    <property type="match status" value="1"/>
</dbReference>
<dbReference type="NCBIfam" id="NF001937">
    <property type="entry name" value="PRK00714.1-4"/>
    <property type="match status" value="1"/>
</dbReference>
<dbReference type="NCBIfam" id="NF001938">
    <property type="entry name" value="PRK00714.1-5"/>
    <property type="match status" value="1"/>
</dbReference>
<dbReference type="PANTHER" id="PTHR43736">
    <property type="entry name" value="ADP-RIBOSE PYROPHOSPHATASE"/>
    <property type="match status" value="1"/>
</dbReference>
<dbReference type="PANTHER" id="PTHR43736:SF1">
    <property type="entry name" value="DIHYDRONEOPTERIN TRIPHOSPHATE DIPHOSPHATASE"/>
    <property type="match status" value="1"/>
</dbReference>
<dbReference type="Pfam" id="PF00293">
    <property type="entry name" value="NUDIX"/>
    <property type="match status" value="1"/>
</dbReference>
<dbReference type="PRINTS" id="PR00502">
    <property type="entry name" value="NUDIXFAMILY"/>
</dbReference>
<dbReference type="SUPFAM" id="SSF55811">
    <property type="entry name" value="Nudix"/>
    <property type="match status" value="1"/>
</dbReference>
<dbReference type="PROSITE" id="PS51462">
    <property type="entry name" value="NUDIX"/>
    <property type="match status" value="1"/>
</dbReference>
<dbReference type="PROSITE" id="PS00893">
    <property type="entry name" value="NUDIX_BOX"/>
    <property type="match status" value="1"/>
</dbReference>
<keyword id="KW-0378">Hydrolase</keyword>
<comment type="function">
    <text evidence="1">Accelerates the degradation of transcripts by removing pyrophosphate from the 5'-end of triphosphorylated RNA, leading to a more labile monophosphorylated state that can stimulate subsequent ribonuclease cleavage.</text>
</comment>
<comment type="cofactor">
    <cofactor evidence="1">
        <name>a divalent metal cation</name>
        <dbReference type="ChEBI" id="CHEBI:60240"/>
    </cofactor>
</comment>
<comment type="similarity">
    <text evidence="1">Belongs to the Nudix hydrolase family. RppH subfamily.</text>
</comment>
<feature type="chain" id="PRO_1000115290" description="RNA pyrophosphohydrolase">
    <location>
        <begin position="1"/>
        <end position="235"/>
    </location>
</feature>
<feature type="domain" description="Nudix hydrolase" evidence="1">
    <location>
        <begin position="6"/>
        <end position="149"/>
    </location>
</feature>
<feature type="region of interest" description="Disordered" evidence="2">
    <location>
        <begin position="161"/>
        <end position="235"/>
    </location>
</feature>
<feature type="short sequence motif" description="Nudix box">
    <location>
        <begin position="38"/>
        <end position="59"/>
    </location>
</feature>
<feature type="compositionally biased region" description="Basic and acidic residues" evidence="2">
    <location>
        <begin position="171"/>
        <end position="196"/>
    </location>
</feature>
<feature type="compositionally biased region" description="Low complexity" evidence="2">
    <location>
        <begin position="203"/>
        <end position="220"/>
    </location>
</feature>
<evidence type="ECO:0000255" key="1">
    <source>
        <dbReference type="HAMAP-Rule" id="MF_00298"/>
    </source>
</evidence>
<evidence type="ECO:0000256" key="2">
    <source>
        <dbReference type="SAM" id="MobiDB-lite"/>
    </source>
</evidence>
<organism>
    <name type="scientific">Ralstonia pickettii (strain 12J)</name>
    <dbReference type="NCBI Taxonomy" id="402626"/>
    <lineage>
        <taxon>Bacteria</taxon>
        <taxon>Pseudomonadati</taxon>
        <taxon>Pseudomonadota</taxon>
        <taxon>Betaproteobacteria</taxon>
        <taxon>Burkholderiales</taxon>
        <taxon>Burkholderiaceae</taxon>
        <taxon>Ralstonia</taxon>
    </lineage>
</organism>
<accession>B2UCV0</accession>
<name>RPPH_RALPJ</name>
<proteinExistence type="inferred from homology"/>
<sequence>MLDREGFRPNVGIILINARNEVFWGKRIGEHSWQFPQGGIKYGETPEQAMFRELHEEVGLLPEHVRIVGRTRDWLRYEVPDKFIRREIRGHYRGQKQIWFLLRMVGRDCDIQLRATEHPEFDAWRWSQYWVPLEAVIEFKREVYQLALSELSRFVQRQTRAPLSPYGRGGQHRERDGRDARDSRERSSDQGGRNEQHAQPALTVTTTTVIVETVSVSAPTPSSPNPDDTAPKDNS</sequence>
<protein>
    <recommendedName>
        <fullName evidence="1">RNA pyrophosphohydrolase</fullName>
        <ecNumber evidence="1">3.6.1.-</ecNumber>
    </recommendedName>
    <alternativeName>
        <fullName evidence="1">(Di)nucleoside polyphosphate hydrolase</fullName>
    </alternativeName>
</protein>
<gene>
    <name evidence="1" type="primary">rppH</name>
    <name evidence="1" type="synonym">nudH</name>
    <name type="ordered locus">Rpic_3062</name>
</gene>
<reference key="1">
    <citation type="submission" date="2008-05" db="EMBL/GenBank/DDBJ databases">
        <title>Complete sequence of chromosome 1 of Ralstonia pickettii 12J.</title>
        <authorList>
            <person name="Lucas S."/>
            <person name="Copeland A."/>
            <person name="Lapidus A."/>
            <person name="Glavina del Rio T."/>
            <person name="Dalin E."/>
            <person name="Tice H."/>
            <person name="Bruce D."/>
            <person name="Goodwin L."/>
            <person name="Pitluck S."/>
            <person name="Meincke L."/>
            <person name="Brettin T."/>
            <person name="Detter J.C."/>
            <person name="Han C."/>
            <person name="Kuske C.R."/>
            <person name="Schmutz J."/>
            <person name="Larimer F."/>
            <person name="Land M."/>
            <person name="Hauser L."/>
            <person name="Kyrpides N."/>
            <person name="Mikhailova N."/>
            <person name="Marsh T."/>
            <person name="Richardson P."/>
        </authorList>
    </citation>
    <scope>NUCLEOTIDE SEQUENCE [LARGE SCALE GENOMIC DNA]</scope>
    <source>
        <strain>12J</strain>
    </source>
</reference>